<protein>
    <recommendedName>
        <fullName evidence="1">UPF0397 protein LGAS_1499</fullName>
    </recommendedName>
</protein>
<reference key="1">
    <citation type="journal article" date="2006" name="Proc. Natl. Acad. Sci. U.S.A.">
        <title>Comparative genomics of the lactic acid bacteria.</title>
        <authorList>
            <person name="Makarova K.S."/>
            <person name="Slesarev A."/>
            <person name="Wolf Y.I."/>
            <person name="Sorokin A."/>
            <person name="Mirkin B."/>
            <person name="Koonin E.V."/>
            <person name="Pavlov A."/>
            <person name="Pavlova N."/>
            <person name="Karamychev V."/>
            <person name="Polouchine N."/>
            <person name="Shakhova V."/>
            <person name="Grigoriev I."/>
            <person name="Lou Y."/>
            <person name="Rohksar D."/>
            <person name="Lucas S."/>
            <person name="Huang K."/>
            <person name="Goodstein D.M."/>
            <person name="Hawkins T."/>
            <person name="Plengvidhya V."/>
            <person name="Welker D."/>
            <person name="Hughes J."/>
            <person name="Goh Y."/>
            <person name="Benson A."/>
            <person name="Baldwin K."/>
            <person name="Lee J.-H."/>
            <person name="Diaz-Muniz I."/>
            <person name="Dosti B."/>
            <person name="Smeianov V."/>
            <person name="Wechter W."/>
            <person name="Barabote R."/>
            <person name="Lorca G."/>
            <person name="Altermann E."/>
            <person name="Barrangou R."/>
            <person name="Ganesan B."/>
            <person name="Xie Y."/>
            <person name="Rawsthorne H."/>
            <person name="Tamir D."/>
            <person name="Parker C."/>
            <person name="Breidt F."/>
            <person name="Broadbent J.R."/>
            <person name="Hutkins R."/>
            <person name="O'Sullivan D."/>
            <person name="Steele J."/>
            <person name="Unlu G."/>
            <person name="Saier M.H. Jr."/>
            <person name="Klaenhammer T."/>
            <person name="Richardson P."/>
            <person name="Kozyavkin S."/>
            <person name="Weimer B.C."/>
            <person name="Mills D.A."/>
        </authorList>
    </citation>
    <scope>NUCLEOTIDE SEQUENCE [LARGE SCALE GENOMIC DNA]</scope>
    <source>
        <strain>ATCC 33323 / DSM 20243 / BCRC 14619 / CIP 102991 / JCM 1131 / KCTC 3163 / NCIMB 11718 / NCTC 13722 / AM63</strain>
    </source>
</reference>
<keyword id="KW-1003">Cell membrane</keyword>
<keyword id="KW-0472">Membrane</keyword>
<keyword id="KW-0812">Transmembrane</keyword>
<keyword id="KW-1133">Transmembrane helix</keyword>
<feature type="chain" id="PRO_1000069200" description="UPF0397 protein LGAS_1499">
    <location>
        <begin position="1"/>
        <end position="185"/>
    </location>
</feature>
<feature type="transmembrane region" description="Helical" evidence="1">
    <location>
        <begin position="6"/>
        <end position="26"/>
    </location>
</feature>
<feature type="transmembrane region" description="Helical" evidence="1">
    <location>
        <begin position="46"/>
        <end position="66"/>
    </location>
</feature>
<feature type="transmembrane region" description="Helical" evidence="1">
    <location>
        <begin position="78"/>
        <end position="98"/>
    </location>
</feature>
<feature type="transmembrane region" description="Helical" evidence="1">
    <location>
        <begin position="118"/>
        <end position="138"/>
    </location>
</feature>
<feature type="transmembrane region" description="Helical" evidence="1">
    <location>
        <begin position="147"/>
        <end position="167"/>
    </location>
</feature>
<comment type="subcellular location">
    <subcellularLocation>
        <location evidence="1">Cell membrane</location>
        <topology evidence="1">Multi-pass membrane protein</topology>
    </subcellularLocation>
</comment>
<comment type="similarity">
    <text evidence="1">Belongs to the UPF0397 family.</text>
</comment>
<proteinExistence type="inferred from homology"/>
<gene>
    <name type="ordered locus">LGAS_1499</name>
</gene>
<sequence>MNKQKGLSVKSVVAIGIGAAIYVILARFTSIPTGIPNTNIEIVYPFLALLATIYGPVVGFSVGFIGHALGDFLMYGQTWWSWVLATAVLGLIIGLYGMRLDLDNGVFTVKQMVGFNVVQIIANVISWLLIAPVGDILIYSEPQNKVFLQGATATITNSLSILILGTILLKAYAATKVKKGSLRKD</sequence>
<name>Y1499_LACGA</name>
<organism>
    <name type="scientific">Lactobacillus gasseri (strain ATCC 33323 / DSM 20243 / BCRC 14619 / CIP 102991 / JCM 1131 / KCTC 3163 / NCIMB 11718 / NCTC 13722 / AM63)</name>
    <dbReference type="NCBI Taxonomy" id="324831"/>
    <lineage>
        <taxon>Bacteria</taxon>
        <taxon>Bacillati</taxon>
        <taxon>Bacillota</taxon>
        <taxon>Bacilli</taxon>
        <taxon>Lactobacillales</taxon>
        <taxon>Lactobacillaceae</taxon>
        <taxon>Lactobacillus</taxon>
    </lineage>
</organism>
<accession>Q041L7</accession>
<dbReference type="EMBL" id="CP000413">
    <property type="protein sequence ID" value="ABJ60855.1"/>
    <property type="molecule type" value="Genomic_DNA"/>
</dbReference>
<dbReference type="RefSeq" id="WP_003646866.1">
    <property type="nucleotide sequence ID" value="NZ_WBMG01000003.1"/>
</dbReference>
<dbReference type="GeneID" id="29638755"/>
<dbReference type="KEGG" id="lga:LGAS_1499"/>
<dbReference type="HOGENOM" id="CLU_120023_0_0_9"/>
<dbReference type="BioCyc" id="LGAS324831:G1G6Y-1494-MONOMER"/>
<dbReference type="Proteomes" id="UP000000664">
    <property type="component" value="Chromosome"/>
</dbReference>
<dbReference type="GO" id="GO:0005886">
    <property type="term" value="C:plasma membrane"/>
    <property type="evidence" value="ECO:0007669"/>
    <property type="project" value="UniProtKB-SubCell"/>
</dbReference>
<dbReference type="Gene3D" id="1.10.1760.20">
    <property type="match status" value="1"/>
</dbReference>
<dbReference type="HAMAP" id="MF_01572">
    <property type="entry name" value="UPF0397"/>
    <property type="match status" value="1"/>
</dbReference>
<dbReference type="InterPro" id="IPR009825">
    <property type="entry name" value="ECF_substrate-spec-like"/>
</dbReference>
<dbReference type="InterPro" id="IPR022914">
    <property type="entry name" value="UPF0397"/>
</dbReference>
<dbReference type="NCBIfam" id="NF010182">
    <property type="entry name" value="PRK13661.1"/>
    <property type="match status" value="1"/>
</dbReference>
<dbReference type="PANTHER" id="PTHR37815">
    <property type="entry name" value="UPF0397 PROTEIN BC_2624-RELATED"/>
    <property type="match status" value="1"/>
</dbReference>
<dbReference type="PANTHER" id="PTHR37815:SF3">
    <property type="entry name" value="UPF0397 PROTEIN SPR0429"/>
    <property type="match status" value="1"/>
</dbReference>
<dbReference type="Pfam" id="PF07155">
    <property type="entry name" value="ECF-ribofla_trS"/>
    <property type="match status" value="1"/>
</dbReference>
<evidence type="ECO:0000255" key="1">
    <source>
        <dbReference type="HAMAP-Rule" id="MF_01572"/>
    </source>
</evidence>